<gene>
    <name evidence="1" type="primary">gpmA</name>
    <name type="ordered locus">MA_2400</name>
</gene>
<dbReference type="EC" id="5.4.2.11" evidence="1"/>
<dbReference type="EMBL" id="AE010299">
    <property type="protein sequence ID" value="AAM05786.1"/>
    <property type="molecule type" value="Genomic_DNA"/>
</dbReference>
<dbReference type="RefSeq" id="WP_011022371.1">
    <property type="nucleotide sequence ID" value="NC_003552.1"/>
</dbReference>
<dbReference type="SMR" id="Q8TN93"/>
<dbReference type="STRING" id="188937.MA_2400"/>
<dbReference type="EnsemblBacteria" id="AAM05786">
    <property type="protein sequence ID" value="AAM05786"/>
    <property type="gene ID" value="MA_2400"/>
</dbReference>
<dbReference type="GeneID" id="1474289"/>
<dbReference type="KEGG" id="mac:MA_2400"/>
<dbReference type="HOGENOM" id="CLU_033323_1_4_2"/>
<dbReference type="InParanoid" id="Q8TN93"/>
<dbReference type="OrthoDB" id="304253at2157"/>
<dbReference type="PhylomeDB" id="Q8TN93"/>
<dbReference type="UniPathway" id="UPA00109">
    <property type="reaction ID" value="UER00186"/>
</dbReference>
<dbReference type="Proteomes" id="UP000002487">
    <property type="component" value="Chromosome"/>
</dbReference>
<dbReference type="GO" id="GO:0004619">
    <property type="term" value="F:phosphoglycerate mutase activity"/>
    <property type="evidence" value="ECO:0007669"/>
    <property type="project" value="UniProtKB-EC"/>
</dbReference>
<dbReference type="GO" id="GO:0006094">
    <property type="term" value="P:gluconeogenesis"/>
    <property type="evidence" value="ECO:0007669"/>
    <property type="project" value="UniProtKB-UniRule"/>
</dbReference>
<dbReference type="GO" id="GO:0006096">
    <property type="term" value="P:glycolytic process"/>
    <property type="evidence" value="ECO:0007669"/>
    <property type="project" value="UniProtKB-UniRule"/>
</dbReference>
<dbReference type="CDD" id="cd07067">
    <property type="entry name" value="HP_PGM_like"/>
    <property type="match status" value="1"/>
</dbReference>
<dbReference type="Gene3D" id="3.40.50.1240">
    <property type="entry name" value="Phosphoglycerate mutase-like"/>
    <property type="match status" value="1"/>
</dbReference>
<dbReference type="HAMAP" id="MF_01039">
    <property type="entry name" value="PGAM_GpmA"/>
    <property type="match status" value="1"/>
</dbReference>
<dbReference type="InterPro" id="IPR013078">
    <property type="entry name" value="His_Pase_superF_clade-1"/>
</dbReference>
<dbReference type="InterPro" id="IPR029033">
    <property type="entry name" value="His_PPase_superfam"/>
</dbReference>
<dbReference type="InterPro" id="IPR001345">
    <property type="entry name" value="PG/BPGM_mutase_AS"/>
</dbReference>
<dbReference type="InterPro" id="IPR005952">
    <property type="entry name" value="Phosphogly_mut1"/>
</dbReference>
<dbReference type="PANTHER" id="PTHR11931">
    <property type="entry name" value="PHOSPHOGLYCERATE MUTASE"/>
    <property type="match status" value="1"/>
</dbReference>
<dbReference type="Pfam" id="PF00300">
    <property type="entry name" value="His_Phos_1"/>
    <property type="match status" value="2"/>
</dbReference>
<dbReference type="PIRSF" id="PIRSF000709">
    <property type="entry name" value="6PFK_2-Ptase"/>
    <property type="match status" value="1"/>
</dbReference>
<dbReference type="SMART" id="SM00855">
    <property type="entry name" value="PGAM"/>
    <property type="match status" value="1"/>
</dbReference>
<dbReference type="SUPFAM" id="SSF53254">
    <property type="entry name" value="Phosphoglycerate mutase-like"/>
    <property type="match status" value="1"/>
</dbReference>
<dbReference type="PROSITE" id="PS00175">
    <property type="entry name" value="PG_MUTASE"/>
    <property type="match status" value="1"/>
</dbReference>
<keyword id="KW-0312">Gluconeogenesis</keyword>
<keyword id="KW-0324">Glycolysis</keyword>
<keyword id="KW-0413">Isomerase</keyword>
<keyword id="KW-1185">Reference proteome</keyword>
<sequence length="248" mass="28313">MSYLIIVRHGESGWNVDGRFGGWVDVPLTGKGIKEALLCAAELEGIDLDVTFTSKLIRAQETLFLILSKQKKIGVFVHEEAGTGEDRTEREDGSRKDRKEKRYAYPPNTEKNLIPIHSNEALNERYYGILQGKKKDKMKAKYGEEQILHWCRSFDEGPPEGESLKDIYRRAVPYFEKEIFPILQDGKNVIVCAHQNSLRALIKHIEGISNEDIRKIRLANARPVIYTFSGGRLVRENAETDPSVKRNL</sequence>
<accession>Q8TN93</accession>
<name>GPMA_METAC</name>
<proteinExistence type="inferred from homology"/>
<reference key="1">
    <citation type="journal article" date="2002" name="Genome Res.">
        <title>The genome of Methanosarcina acetivorans reveals extensive metabolic and physiological diversity.</title>
        <authorList>
            <person name="Galagan J.E."/>
            <person name="Nusbaum C."/>
            <person name="Roy A."/>
            <person name="Endrizzi M.G."/>
            <person name="Macdonald P."/>
            <person name="FitzHugh W."/>
            <person name="Calvo S."/>
            <person name="Engels R."/>
            <person name="Smirnov S."/>
            <person name="Atnoor D."/>
            <person name="Brown A."/>
            <person name="Allen N."/>
            <person name="Naylor J."/>
            <person name="Stange-Thomann N."/>
            <person name="DeArellano K."/>
            <person name="Johnson R."/>
            <person name="Linton L."/>
            <person name="McEwan P."/>
            <person name="McKernan K."/>
            <person name="Talamas J."/>
            <person name="Tirrell A."/>
            <person name="Ye W."/>
            <person name="Zimmer A."/>
            <person name="Barber R.D."/>
            <person name="Cann I."/>
            <person name="Graham D.E."/>
            <person name="Grahame D.A."/>
            <person name="Guss A.M."/>
            <person name="Hedderich R."/>
            <person name="Ingram-Smith C."/>
            <person name="Kuettner H.C."/>
            <person name="Krzycki J.A."/>
            <person name="Leigh J.A."/>
            <person name="Li W."/>
            <person name="Liu J."/>
            <person name="Mukhopadhyay B."/>
            <person name="Reeve J.N."/>
            <person name="Smith K."/>
            <person name="Springer T.A."/>
            <person name="Umayam L.A."/>
            <person name="White O."/>
            <person name="White R.H."/>
            <person name="de Macario E.C."/>
            <person name="Ferry J.G."/>
            <person name="Jarrell K.F."/>
            <person name="Jing H."/>
            <person name="Macario A.J.L."/>
            <person name="Paulsen I.T."/>
            <person name="Pritchett M."/>
            <person name="Sowers K.R."/>
            <person name="Swanson R.V."/>
            <person name="Zinder S.H."/>
            <person name="Lander E."/>
            <person name="Metcalf W.W."/>
            <person name="Birren B."/>
        </authorList>
    </citation>
    <scope>NUCLEOTIDE SEQUENCE [LARGE SCALE GENOMIC DNA]</scope>
    <source>
        <strain>ATCC 35395 / DSM 2834 / JCM 12185 / C2A</strain>
    </source>
</reference>
<protein>
    <recommendedName>
        <fullName evidence="1">2,3-bisphosphoglycerate-dependent phosphoglycerate mutase</fullName>
        <shortName evidence="1">BPG-dependent PGAM</shortName>
        <shortName evidence="1">PGAM</shortName>
        <shortName evidence="1">Phosphoglyceromutase</shortName>
        <shortName evidence="1">dPGM</shortName>
        <ecNumber evidence="1">5.4.2.11</ecNumber>
    </recommendedName>
</protein>
<organism>
    <name type="scientific">Methanosarcina acetivorans (strain ATCC 35395 / DSM 2834 / JCM 12185 / C2A)</name>
    <dbReference type="NCBI Taxonomy" id="188937"/>
    <lineage>
        <taxon>Archaea</taxon>
        <taxon>Methanobacteriati</taxon>
        <taxon>Methanobacteriota</taxon>
        <taxon>Stenosarchaea group</taxon>
        <taxon>Methanomicrobia</taxon>
        <taxon>Methanosarcinales</taxon>
        <taxon>Methanosarcinaceae</taxon>
        <taxon>Methanosarcina</taxon>
    </lineage>
</organism>
<evidence type="ECO:0000255" key="1">
    <source>
        <dbReference type="HAMAP-Rule" id="MF_01039"/>
    </source>
</evidence>
<evidence type="ECO:0000256" key="2">
    <source>
        <dbReference type="SAM" id="MobiDB-lite"/>
    </source>
</evidence>
<comment type="function">
    <text evidence="1">Catalyzes the interconversion of 2-phosphoglycerate and 3-phosphoglycerate.</text>
</comment>
<comment type="catalytic activity">
    <reaction evidence="1">
        <text>(2R)-2-phosphoglycerate = (2R)-3-phosphoglycerate</text>
        <dbReference type="Rhea" id="RHEA:15901"/>
        <dbReference type="ChEBI" id="CHEBI:58272"/>
        <dbReference type="ChEBI" id="CHEBI:58289"/>
        <dbReference type="EC" id="5.4.2.11"/>
    </reaction>
</comment>
<comment type="pathway">
    <text evidence="1">Carbohydrate degradation; glycolysis; pyruvate from D-glyceraldehyde 3-phosphate: step 3/5.</text>
</comment>
<comment type="similarity">
    <text evidence="1">Belongs to the phosphoglycerate mutase family. BPG-dependent PGAM subfamily.</text>
</comment>
<feature type="chain" id="PRO_0000179944" description="2,3-bisphosphoglycerate-dependent phosphoglycerate mutase">
    <location>
        <begin position="1"/>
        <end position="248"/>
    </location>
</feature>
<feature type="region of interest" description="Disordered" evidence="2">
    <location>
        <begin position="82"/>
        <end position="101"/>
    </location>
</feature>
<feature type="active site" description="Tele-phosphohistidine intermediate" evidence="1">
    <location>
        <position position="9"/>
    </location>
</feature>
<feature type="active site" description="Proton donor/acceptor" evidence="1">
    <location>
        <position position="124"/>
    </location>
</feature>
<feature type="binding site" evidence="1">
    <location>
        <begin position="8"/>
        <end position="15"/>
    </location>
    <ligand>
        <name>substrate</name>
    </ligand>
</feature>
<feature type="binding site" evidence="1">
    <location>
        <position position="58"/>
    </location>
    <ligand>
        <name>substrate</name>
    </ligand>
</feature>
<feature type="binding site" evidence="1">
    <location>
        <begin position="124"/>
        <end position="127"/>
    </location>
    <ligand>
        <name>substrate</name>
    </ligand>
</feature>
<feature type="binding site" evidence="1">
    <location>
        <position position="135"/>
    </location>
    <ligand>
        <name>substrate</name>
    </ligand>
</feature>
<feature type="site" description="Transition state stabilizer" evidence="1">
    <location>
        <position position="194"/>
    </location>
</feature>